<proteinExistence type="inferred from homology"/>
<evidence type="ECO:0000250" key="1"/>
<evidence type="ECO:0000256" key="2">
    <source>
        <dbReference type="SAM" id="MobiDB-lite"/>
    </source>
</evidence>
<evidence type="ECO:0000305" key="3"/>
<comment type="function">
    <text evidence="1">Involved both in the piRNA and miRNA metabolic processes. As a component of the meiotic nuage, plays a central role during oogenesis by repressing transposable elements and preventing their mobilization, which is essential for the germline integrity. Repression of transposable elements is mediated via the piRNA metabolic process, which mediates the repression of transposable elements during meiosis by forming complexes composed of piRNAs and Piwi proteins and governs the repression of transposons. As a nuclear component, it is required for proper differentiation in the germline stem cell (GSC) lineage by repressing microRNA-7 (miR-7), thereby acting as an indirect regulator of bag-of-marbles (Bam). Acts by binding to the promoter of miR-7 gene and repressing its expression; miR-7 repression alleviates the Bam repression by miR-7, thereby allowing differentiation in the germline stem cell (GSC) lineage (By similarity).</text>
</comment>
<comment type="subcellular location">
    <subcellularLocation>
        <location>Cytoplasm</location>
    </subcellularLocation>
    <subcellularLocation>
        <location>Nucleus</location>
    </subcellularLocation>
    <text evidence="1">Component of the meiotic nuage, also named P granule, a germ-cell-specific organelle required to repress transposon activity during meiosis.</text>
</comment>
<comment type="similarity">
    <text evidence="3">Belongs to the maelstrom family.</text>
</comment>
<comment type="sequence caution" evidence="3">
    <conflict type="erroneous initiation">
        <sequence resource="EMBL-CDS" id="EDW39172"/>
    </conflict>
</comment>
<reference key="1">
    <citation type="journal article" date="2007" name="Nature">
        <title>Evolution of genes and genomes on the Drosophila phylogeny.</title>
        <authorList>
            <consortium name="Drosophila 12 genomes consortium"/>
        </authorList>
    </citation>
    <scope>NUCLEOTIDE SEQUENCE [LARGE SCALE GENOMIC DNA]</scope>
    <source>
        <strain>MSH-3 / Tucson 14011-0111.49</strain>
    </source>
</reference>
<organism>
    <name type="scientific">Drosophila persimilis</name>
    <name type="common">Fruit fly</name>
    <dbReference type="NCBI Taxonomy" id="7234"/>
    <lineage>
        <taxon>Eukaryota</taxon>
        <taxon>Metazoa</taxon>
        <taxon>Ecdysozoa</taxon>
        <taxon>Arthropoda</taxon>
        <taxon>Hexapoda</taxon>
        <taxon>Insecta</taxon>
        <taxon>Pterygota</taxon>
        <taxon>Neoptera</taxon>
        <taxon>Endopterygota</taxon>
        <taxon>Diptera</taxon>
        <taxon>Brachycera</taxon>
        <taxon>Muscomorpha</taxon>
        <taxon>Ephydroidea</taxon>
        <taxon>Drosophilidae</taxon>
        <taxon>Drosophila</taxon>
        <taxon>Sophophora</taxon>
    </lineage>
</organism>
<protein>
    <recommendedName>
        <fullName>Protein maelstrom 1</fullName>
    </recommendedName>
</protein>
<feature type="chain" id="PRO_0000367301" description="Protein maelstrom 1">
    <location>
        <begin position="1"/>
        <end position="438"/>
    </location>
</feature>
<feature type="DNA-binding region" description="HMG box">
    <location>
        <begin position="2"/>
        <end position="69"/>
    </location>
</feature>
<feature type="region of interest" description="Disordered" evidence="2">
    <location>
        <begin position="374"/>
        <end position="438"/>
    </location>
</feature>
<feature type="compositionally biased region" description="Polar residues" evidence="2">
    <location>
        <begin position="381"/>
        <end position="391"/>
    </location>
</feature>
<name>MAEL1_DROPE</name>
<gene>
    <name type="primary">mael1</name>
    <name type="ORF">GL13550</name>
</gene>
<keyword id="KW-0963">Cytoplasm</keyword>
<keyword id="KW-0217">Developmental protein</keyword>
<keyword id="KW-0221">Differentiation</keyword>
<keyword id="KW-0238">DNA-binding</keyword>
<keyword id="KW-0469">Meiosis</keyword>
<keyword id="KW-0539">Nucleus</keyword>
<keyword id="KW-0896">Oogenesis</keyword>
<keyword id="KW-1185">Reference proteome</keyword>
<keyword id="KW-0678">Repressor</keyword>
<keyword id="KW-0943">RNA-mediated gene silencing</keyword>
<keyword id="KW-0804">Transcription</keyword>
<keyword id="KW-0805">Transcription regulation</keyword>
<sequence>MAPKKRNGFMTFVKEWQANNPVARGLSNSEAVAKCDPIWKSMGDQERGPYNSMAKNANVLERTAKKERLNCLGGSVAEMEIEKNEAISAELQMKRKIERIILTAKNSMELENEDFVFVSFNYFTKALTGDIYVPAEFSACRYSLKGGISSNYSTMINPGHIIYGQSRDAQDHSKTTHKLPLPPQAFGETNMGKLYIDIFNWLSVRNEEKLDQDPVIVYTTPELMPVVKSCFRYLASEAEIDEDERKIMVFDIHHLFYTLKKSVLDVAGVTNDRINFHVTNNFFVKDFFEYTEGISCDYHEKIDRSKYCTNSMVKRWGFTFSDYMCADLAIPLQPGKHIPLKVKPNYTITPASSSTNFDEISLDSYYSAPPRIQKEMGSRDLSPSSSHQSVSRAYVPRDHSVYGGTLDSDEEFPSLGGRRRQLPDKSHFNMGAGKKIAR</sequence>
<dbReference type="EMBL" id="CH479186">
    <property type="protein sequence ID" value="EDW39172.1"/>
    <property type="status" value="ALT_INIT"/>
    <property type="molecule type" value="Genomic_DNA"/>
</dbReference>
<dbReference type="RefSeq" id="XP_002020360.1">
    <property type="nucleotide sequence ID" value="XM_002020324.1"/>
</dbReference>
<dbReference type="SMR" id="B4GN46"/>
<dbReference type="EnsemblMetazoa" id="FBtr0179165">
    <property type="protein sequence ID" value="FBpp0177657"/>
    <property type="gene ID" value="FBgn0151155"/>
</dbReference>
<dbReference type="EnsemblMetazoa" id="XM_026993403.1">
    <property type="protein sequence ID" value="XP_026849204.1"/>
    <property type="gene ID" value="LOC6604511"/>
</dbReference>
<dbReference type="EnsemblMetazoa" id="XM_026993407.1">
    <property type="protein sequence ID" value="XP_026849208.1"/>
    <property type="gene ID" value="LOC113566683"/>
</dbReference>
<dbReference type="EnsemblMetazoa" id="XM_026993413.1">
    <property type="protein sequence ID" value="XP_026849214.1"/>
    <property type="gene ID" value="LOC113566685"/>
</dbReference>
<dbReference type="eggNOG" id="ENOG502QTQB">
    <property type="taxonomic scope" value="Eukaryota"/>
</dbReference>
<dbReference type="OrthoDB" id="24555at2759"/>
<dbReference type="Proteomes" id="UP000008744">
    <property type="component" value="Unassembled WGS sequence"/>
</dbReference>
<dbReference type="GO" id="GO:0005737">
    <property type="term" value="C:cytoplasm"/>
    <property type="evidence" value="ECO:0000250"/>
    <property type="project" value="UniProtKB"/>
</dbReference>
<dbReference type="GO" id="GO:0005634">
    <property type="term" value="C:nucleus"/>
    <property type="evidence" value="ECO:0000250"/>
    <property type="project" value="UniProtKB"/>
</dbReference>
<dbReference type="GO" id="GO:0043186">
    <property type="term" value="C:P granule"/>
    <property type="evidence" value="ECO:0000250"/>
    <property type="project" value="UniProtKB"/>
</dbReference>
<dbReference type="GO" id="GO:0048471">
    <property type="term" value="C:perinuclear region of cytoplasm"/>
    <property type="evidence" value="ECO:0000250"/>
    <property type="project" value="UniProtKB"/>
</dbReference>
<dbReference type="GO" id="GO:0000976">
    <property type="term" value="F:transcription cis-regulatory region binding"/>
    <property type="evidence" value="ECO:0000250"/>
    <property type="project" value="UniProtKB"/>
</dbReference>
<dbReference type="GO" id="GO:0030718">
    <property type="term" value="P:germ-line stem cell population maintenance"/>
    <property type="evidence" value="ECO:0000250"/>
    <property type="project" value="UniProtKB"/>
</dbReference>
<dbReference type="GO" id="GO:0007140">
    <property type="term" value="P:male meiotic nuclear division"/>
    <property type="evidence" value="ECO:0007669"/>
    <property type="project" value="TreeGrafter"/>
</dbReference>
<dbReference type="GO" id="GO:0045892">
    <property type="term" value="P:negative regulation of DNA-templated transcription"/>
    <property type="evidence" value="ECO:0000250"/>
    <property type="project" value="UniProtKB"/>
</dbReference>
<dbReference type="GO" id="GO:0048477">
    <property type="term" value="P:oogenesis"/>
    <property type="evidence" value="ECO:0007669"/>
    <property type="project" value="UniProtKB-KW"/>
</dbReference>
<dbReference type="GO" id="GO:0034587">
    <property type="term" value="P:piRNA processing"/>
    <property type="evidence" value="ECO:0000250"/>
    <property type="project" value="UniProtKB"/>
</dbReference>
<dbReference type="GO" id="GO:0060964">
    <property type="term" value="P:regulation of miRNA-mediated gene silencing"/>
    <property type="evidence" value="ECO:0007669"/>
    <property type="project" value="InterPro"/>
</dbReference>
<dbReference type="GO" id="GO:0031047">
    <property type="term" value="P:regulatory ncRNA-mediated gene silencing"/>
    <property type="evidence" value="ECO:0000250"/>
    <property type="project" value="UniProtKB"/>
</dbReference>
<dbReference type="GO" id="GO:0007283">
    <property type="term" value="P:spermatogenesis"/>
    <property type="evidence" value="ECO:0000250"/>
    <property type="project" value="UniProtKB"/>
</dbReference>
<dbReference type="FunFam" id="1.10.30.10:FF:000057">
    <property type="entry name" value="Protein maelstrom 2"/>
    <property type="match status" value="1"/>
</dbReference>
<dbReference type="Gene3D" id="1.10.30.10">
    <property type="entry name" value="High mobility group box domain"/>
    <property type="match status" value="1"/>
</dbReference>
<dbReference type="InterPro" id="IPR036910">
    <property type="entry name" value="HMG_box_dom_sf"/>
</dbReference>
<dbReference type="InterPro" id="IPR024970">
    <property type="entry name" value="Maelstrom"/>
</dbReference>
<dbReference type="InterPro" id="IPR039259">
    <property type="entry name" value="Protein_maelstrom"/>
</dbReference>
<dbReference type="PANTHER" id="PTHR21358">
    <property type="entry name" value="PROTEIN MAELSTROM HOMOLOG"/>
    <property type="match status" value="1"/>
</dbReference>
<dbReference type="PANTHER" id="PTHR21358:SF4">
    <property type="entry name" value="PROTEIN MAELSTROM HOMOLOG"/>
    <property type="match status" value="1"/>
</dbReference>
<dbReference type="Pfam" id="PF13017">
    <property type="entry name" value="Maelstrom"/>
    <property type="match status" value="1"/>
</dbReference>
<dbReference type="SUPFAM" id="SSF47095">
    <property type="entry name" value="HMG-box"/>
    <property type="match status" value="1"/>
</dbReference>
<accession>B4GN46</accession>